<evidence type="ECO:0000250" key="1"/>
<evidence type="ECO:0000305" key="2"/>
<accession>Q9PGZ9</accession>
<sequence>MKAPLRALICQGIEALRSNGTLPTNTLPPDFVVERPKTRKHGDFATNVAMLLSKATGSNPRLLAQTLVAALPTSADIARIEIAGPGFINFHLHPVAYQRETINVLKQDNDYGRNLSGQSRTVGVEYVSANPTGPLHVGHGRAAAIGDCLARLLEANGWNVKREFYYNDAGVQIENLVRSVQARARGLKPGDAFWPTDAYNGEYIADIAKAYLAGDSINMVDTIITSTKNVDDTAAIHHFAVNYLRNEQNHDLAAFNVDFDIYFLESSLYKDGKVEETVQKLINSGHTYEEGGALWLKSTHFGDDKDRVMRKSDGSYTYFVPDIAYHLSKWQRGYERAITELGADHHGSLARVHAGLQALEIGIPPGWPEYVLHQMVTVMRGGEEVKLSKRSGGYVTLRDLIEETSTDATRWFLIARKPDSQLTFDIDLARQKSNDNPVFYVQYAYARVCSLMHQAHEKNLNYDQTSGMASLDQLSDNTSLCLMIEISRYPEIVQIACELLEPHLIAQYLRELAHAFHTWYHNTPVLVENAVERNAKLTLACATRQVLANGLNLLGVGTPEKM</sequence>
<comment type="catalytic activity">
    <reaction>
        <text>tRNA(Arg) + L-arginine + ATP = L-arginyl-tRNA(Arg) + AMP + diphosphate</text>
        <dbReference type="Rhea" id="RHEA:20301"/>
        <dbReference type="Rhea" id="RHEA-COMP:9658"/>
        <dbReference type="Rhea" id="RHEA-COMP:9673"/>
        <dbReference type="ChEBI" id="CHEBI:30616"/>
        <dbReference type="ChEBI" id="CHEBI:32682"/>
        <dbReference type="ChEBI" id="CHEBI:33019"/>
        <dbReference type="ChEBI" id="CHEBI:78442"/>
        <dbReference type="ChEBI" id="CHEBI:78513"/>
        <dbReference type="ChEBI" id="CHEBI:456215"/>
        <dbReference type="EC" id="6.1.1.19"/>
    </reaction>
</comment>
<comment type="subunit">
    <text evidence="1">Monomer.</text>
</comment>
<comment type="subcellular location">
    <subcellularLocation>
        <location evidence="1">Cytoplasm</location>
    </subcellularLocation>
</comment>
<comment type="similarity">
    <text evidence="2">Belongs to the class-I aminoacyl-tRNA synthetase family.</text>
</comment>
<comment type="sequence caution" evidence="2">
    <conflict type="erroneous initiation">
        <sequence resource="EMBL-CDS" id="AAF82960"/>
    </conflict>
</comment>
<proteinExistence type="inferred from homology"/>
<gene>
    <name type="primary">argS</name>
    <name type="ordered locus">XF_0147</name>
</gene>
<organism>
    <name type="scientific">Xylella fastidiosa (strain 9a5c)</name>
    <dbReference type="NCBI Taxonomy" id="160492"/>
    <lineage>
        <taxon>Bacteria</taxon>
        <taxon>Pseudomonadati</taxon>
        <taxon>Pseudomonadota</taxon>
        <taxon>Gammaproteobacteria</taxon>
        <taxon>Lysobacterales</taxon>
        <taxon>Lysobacteraceae</taxon>
        <taxon>Xylella</taxon>
    </lineage>
</organism>
<dbReference type="EC" id="6.1.1.19"/>
<dbReference type="EMBL" id="AE003849">
    <property type="protein sequence ID" value="AAF82960.1"/>
    <property type="status" value="ALT_INIT"/>
    <property type="molecule type" value="Genomic_DNA"/>
</dbReference>
<dbReference type="PIR" id="F82842">
    <property type="entry name" value="F82842"/>
</dbReference>
<dbReference type="RefSeq" id="WP_031336160.1">
    <property type="nucleotide sequence ID" value="NC_002488.3"/>
</dbReference>
<dbReference type="SMR" id="Q9PGZ9"/>
<dbReference type="STRING" id="160492.XF_0147"/>
<dbReference type="KEGG" id="xfa:XF_0147"/>
<dbReference type="eggNOG" id="COG0018">
    <property type="taxonomic scope" value="Bacteria"/>
</dbReference>
<dbReference type="HOGENOM" id="CLU_006406_0_1_6"/>
<dbReference type="Proteomes" id="UP000000812">
    <property type="component" value="Chromosome"/>
</dbReference>
<dbReference type="GO" id="GO:0005737">
    <property type="term" value="C:cytoplasm"/>
    <property type="evidence" value="ECO:0007669"/>
    <property type="project" value="UniProtKB-SubCell"/>
</dbReference>
<dbReference type="GO" id="GO:0004814">
    <property type="term" value="F:arginine-tRNA ligase activity"/>
    <property type="evidence" value="ECO:0007669"/>
    <property type="project" value="UniProtKB-UniRule"/>
</dbReference>
<dbReference type="GO" id="GO:0005524">
    <property type="term" value="F:ATP binding"/>
    <property type="evidence" value="ECO:0007669"/>
    <property type="project" value="UniProtKB-UniRule"/>
</dbReference>
<dbReference type="GO" id="GO:0006420">
    <property type="term" value="P:arginyl-tRNA aminoacylation"/>
    <property type="evidence" value="ECO:0007669"/>
    <property type="project" value="UniProtKB-UniRule"/>
</dbReference>
<dbReference type="CDD" id="cd00671">
    <property type="entry name" value="ArgRS_core"/>
    <property type="match status" value="1"/>
</dbReference>
<dbReference type="FunFam" id="1.10.730.10:FF:000008">
    <property type="entry name" value="Arginine--tRNA ligase"/>
    <property type="match status" value="1"/>
</dbReference>
<dbReference type="FunFam" id="3.30.1360.70:FF:000003">
    <property type="entry name" value="Arginine--tRNA ligase"/>
    <property type="match status" value="1"/>
</dbReference>
<dbReference type="FunFam" id="3.40.50.620:FF:000062">
    <property type="entry name" value="Arginine--tRNA ligase"/>
    <property type="match status" value="1"/>
</dbReference>
<dbReference type="Gene3D" id="3.30.1360.70">
    <property type="entry name" value="Arginyl tRNA synthetase N-terminal domain"/>
    <property type="match status" value="1"/>
</dbReference>
<dbReference type="Gene3D" id="3.40.50.620">
    <property type="entry name" value="HUPs"/>
    <property type="match status" value="1"/>
</dbReference>
<dbReference type="Gene3D" id="1.10.730.10">
    <property type="entry name" value="Isoleucyl-tRNA Synthetase, Domain 1"/>
    <property type="match status" value="1"/>
</dbReference>
<dbReference type="HAMAP" id="MF_00123">
    <property type="entry name" value="Arg_tRNA_synth"/>
    <property type="match status" value="1"/>
</dbReference>
<dbReference type="InterPro" id="IPR001412">
    <property type="entry name" value="aa-tRNA-synth_I_CS"/>
</dbReference>
<dbReference type="InterPro" id="IPR001278">
    <property type="entry name" value="Arg-tRNA-ligase"/>
</dbReference>
<dbReference type="InterPro" id="IPR005148">
    <property type="entry name" value="Arg-tRNA-synth_N"/>
</dbReference>
<dbReference type="InterPro" id="IPR036695">
    <property type="entry name" value="Arg-tRNA-synth_N_sf"/>
</dbReference>
<dbReference type="InterPro" id="IPR035684">
    <property type="entry name" value="ArgRS_core"/>
</dbReference>
<dbReference type="InterPro" id="IPR008909">
    <property type="entry name" value="DALR_anticod-bd"/>
</dbReference>
<dbReference type="InterPro" id="IPR014729">
    <property type="entry name" value="Rossmann-like_a/b/a_fold"/>
</dbReference>
<dbReference type="InterPro" id="IPR009080">
    <property type="entry name" value="tRNAsynth_Ia_anticodon-bd"/>
</dbReference>
<dbReference type="NCBIfam" id="TIGR00456">
    <property type="entry name" value="argS"/>
    <property type="match status" value="1"/>
</dbReference>
<dbReference type="PANTHER" id="PTHR11956:SF5">
    <property type="entry name" value="ARGININE--TRNA LIGASE, CYTOPLASMIC"/>
    <property type="match status" value="1"/>
</dbReference>
<dbReference type="PANTHER" id="PTHR11956">
    <property type="entry name" value="ARGINYL-TRNA SYNTHETASE"/>
    <property type="match status" value="1"/>
</dbReference>
<dbReference type="Pfam" id="PF03485">
    <property type="entry name" value="Arg_tRNA_synt_N"/>
    <property type="match status" value="1"/>
</dbReference>
<dbReference type="Pfam" id="PF05746">
    <property type="entry name" value="DALR_1"/>
    <property type="match status" value="1"/>
</dbReference>
<dbReference type="Pfam" id="PF00750">
    <property type="entry name" value="tRNA-synt_1d"/>
    <property type="match status" value="1"/>
</dbReference>
<dbReference type="PRINTS" id="PR01038">
    <property type="entry name" value="TRNASYNTHARG"/>
</dbReference>
<dbReference type="SMART" id="SM01016">
    <property type="entry name" value="Arg_tRNA_synt_N"/>
    <property type="match status" value="1"/>
</dbReference>
<dbReference type="SMART" id="SM00836">
    <property type="entry name" value="DALR_1"/>
    <property type="match status" value="1"/>
</dbReference>
<dbReference type="SUPFAM" id="SSF47323">
    <property type="entry name" value="Anticodon-binding domain of a subclass of class I aminoacyl-tRNA synthetases"/>
    <property type="match status" value="1"/>
</dbReference>
<dbReference type="SUPFAM" id="SSF55190">
    <property type="entry name" value="Arginyl-tRNA synthetase (ArgRS), N-terminal 'additional' domain"/>
    <property type="match status" value="1"/>
</dbReference>
<dbReference type="SUPFAM" id="SSF52374">
    <property type="entry name" value="Nucleotidylyl transferase"/>
    <property type="match status" value="1"/>
</dbReference>
<dbReference type="PROSITE" id="PS00178">
    <property type="entry name" value="AA_TRNA_LIGASE_I"/>
    <property type="match status" value="1"/>
</dbReference>
<name>SYR_XYLFA</name>
<feature type="chain" id="PRO_0000151639" description="Arginine--tRNA ligase">
    <location>
        <begin position="1"/>
        <end position="562"/>
    </location>
</feature>
<feature type="short sequence motif" description="'HIGH' region">
    <location>
        <begin position="129"/>
        <end position="139"/>
    </location>
</feature>
<reference key="1">
    <citation type="journal article" date="2000" name="Nature">
        <title>The genome sequence of the plant pathogen Xylella fastidiosa.</title>
        <authorList>
            <person name="Simpson A.J.G."/>
            <person name="Reinach F.C."/>
            <person name="Arruda P."/>
            <person name="Abreu F.A."/>
            <person name="Acencio M."/>
            <person name="Alvarenga R."/>
            <person name="Alves L.M.C."/>
            <person name="Araya J.E."/>
            <person name="Baia G.S."/>
            <person name="Baptista C.S."/>
            <person name="Barros M.H."/>
            <person name="Bonaccorsi E.D."/>
            <person name="Bordin S."/>
            <person name="Bove J.M."/>
            <person name="Briones M.R.S."/>
            <person name="Bueno M.R.P."/>
            <person name="Camargo A.A."/>
            <person name="Camargo L.E.A."/>
            <person name="Carraro D.M."/>
            <person name="Carrer H."/>
            <person name="Colauto N.B."/>
            <person name="Colombo C."/>
            <person name="Costa F.F."/>
            <person name="Costa M.C.R."/>
            <person name="Costa-Neto C.M."/>
            <person name="Coutinho L.L."/>
            <person name="Cristofani M."/>
            <person name="Dias-Neto E."/>
            <person name="Docena C."/>
            <person name="El-Dorry H."/>
            <person name="Facincani A.P."/>
            <person name="Ferreira A.J.S."/>
            <person name="Ferreira V.C.A."/>
            <person name="Ferro J.A."/>
            <person name="Fraga J.S."/>
            <person name="Franca S.C."/>
            <person name="Franco M.C."/>
            <person name="Frohme M."/>
            <person name="Furlan L.R."/>
            <person name="Garnier M."/>
            <person name="Goldman G.H."/>
            <person name="Goldman M.H.S."/>
            <person name="Gomes S.L."/>
            <person name="Gruber A."/>
            <person name="Ho P.L."/>
            <person name="Hoheisel J.D."/>
            <person name="Junqueira M.L."/>
            <person name="Kemper E.L."/>
            <person name="Kitajima J.P."/>
            <person name="Krieger J.E."/>
            <person name="Kuramae E.E."/>
            <person name="Laigret F."/>
            <person name="Lambais M.R."/>
            <person name="Leite L.C.C."/>
            <person name="Lemos E.G.M."/>
            <person name="Lemos M.V.F."/>
            <person name="Lopes S.A."/>
            <person name="Lopes C.R."/>
            <person name="Machado J.A."/>
            <person name="Machado M.A."/>
            <person name="Madeira A.M.B.N."/>
            <person name="Madeira H.M.F."/>
            <person name="Marino C.L."/>
            <person name="Marques M.V."/>
            <person name="Martins E.A.L."/>
            <person name="Martins E.M.F."/>
            <person name="Matsukuma A.Y."/>
            <person name="Menck C.F.M."/>
            <person name="Miracca E.C."/>
            <person name="Miyaki C.Y."/>
            <person name="Monteiro-Vitorello C.B."/>
            <person name="Moon D.H."/>
            <person name="Nagai M.A."/>
            <person name="Nascimento A.L.T.O."/>
            <person name="Netto L.E.S."/>
            <person name="Nhani A. Jr."/>
            <person name="Nobrega F.G."/>
            <person name="Nunes L.R."/>
            <person name="Oliveira M.A."/>
            <person name="de Oliveira M.C."/>
            <person name="de Oliveira R.C."/>
            <person name="Palmieri D.A."/>
            <person name="Paris A."/>
            <person name="Peixoto B.R."/>
            <person name="Pereira G.A.G."/>
            <person name="Pereira H.A. Jr."/>
            <person name="Pesquero J.B."/>
            <person name="Quaggio R.B."/>
            <person name="Roberto P.G."/>
            <person name="Rodrigues V."/>
            <person name="de Rosa A.J.M."/>
            <person name="de Rosa V.E. Jr."/>
            <person name="de Sa R.G."/>
            <person name="Santelli R.V."/>
            <person name="Sawasaki H.E."/>
            <person name="da Silva A.C.R."/>
            <person name="da Silva A.M."/>
            <person name="da Silva F.R."/>
            <person name="Silva W.A. Jr."/>
            <person name="da Silveira J.F."/>
            <person name="Silvestri M.L.Z."/>
            <person name="Siqueira W.J."/>
            <person name="de Souza A.A."/>
            <person name="de Souza A.P."/>
            <person name="Terenzi M.F."/>
            <person name="Truffi D."/>
            <person name="Tsai S.M."/>
            <person name="Tsuhako M.H."/>
            <person name="Vallada H."/>
            <person name="Van Sluys M.A."/>
            <person name="Verjovski-Almeida S."/>
            <person name="Vettore A.L."/>
            <person name="Zago M.A."/>
            <person name="Zatz M."/>
            <person name="Meidanis J."/>
            <person name="Setubal J.C."/>
        </authorList>
    </citation>
    <scope>NUCLEOTIDE SEQUENCE [LARGE SCALE GENOMIC DNA]</scope>
    <source>
        <strain>9a5c</strain>
    </source>
</reference>
<keyword id="KW-0030">Aminoacyl-tRNA synthetase</keyword>
<keyword id="KW-0067">ATP-binding</keyword>
<keyword id="KW-0963">Cytoplasm</keyword>
<keyword id="KW-0436">Ligase</keyword>
<keyword id="KW-0547">Nucleotide-binding</keyword>
<keyword id="KW-0648">Protein biosynthesis</keyword>
<protein>
    <recommendedName>
        <fullName>Arginine--tRNA ligase</fullName>
        <ecNumber>6.1.1.19</ecNumber>
    </recommendedName>
    <alternativeName>
        <fullName>Arginyl-tRNA synthetase</fullName>
        <shortName>ArgRS</shortName>
    </alternativeName>
</protein>